<accession>B8F6J8</accession>
<protein>
    <recommendedName>
        <fullName evidence="1">DNA-binding protein Fis</fullName>
    </recommendedName>
</protein>
<reference key="1">
    <citation type="journal article" date="2009" name="J. Bacteriol.">
        <title>Complete genome sequence of Haemophilus parasuis SH0165.</title>
        <authorList>
            <person name="Yue M."/>
            <person name="Yang F."/>
            <person name="Yang J."/>
            <person name="Bei W."/>
            <person name="Cai X."/>
            <person name="Chen L."/>
            <person name="Dong J."/>
            <person name="Zhou R."/>
            <person name="Jin M."/>
            <person name="Jin Q."/>
            <person name="Chen H."/>
        </authorList>
    </citation>
    <scope>NUCLEOTIDE SEQUENCE [LARGE SCALE GENOMIC DNA]</scope>
    <source>
        <strain>SH0165</strain>
    </source>
</reference>
<comment type="function">
    <text evidence="1">Activates ribosomal RNA transcription. Plays a direct role in upstream activation of rRNA promoters.</text>
</comment>
<comment type="subunit">
    <text evidence="1">Homodimer.</text>
</comment>
<comment type="similarity">
    <text evidence="1">Belongs to the transcriptional regulatory Fis family.</text>
</comment>
<feature type="chain" id="PRO_1000123608" description="DNA-binding protein Fis">
    <location>
        <begin position="1"/>
        <end position="98"/>
    </location>
</feature>
<feature type="DNA-binding region" description="H-T-H motif" evidence="1">
    <location>
        <begin position="74"/>
        <end position="93"/>
    </location>
</feature>
<gene>
    <name evidence="1" type="primary">fis</name>
    <name type="ordered locus">HAPS_1370</name>
</gene>
<dbReference type="EMBL" id="CP001321">
    <property type="protein sequence ID" value="ACL32950.1"/>
    <property type="molecule type" value="Genomic_DNA"/>
</dbReference>
<dbReference type="RefSeq" id="WP_005713908.1">
    <property type="nucleotide sequence ID" value="NC_011852.1"/>
</dbReference>
<dbReference type="SMR" id="B8F6J8"/>
<dbReference type="STRING" id="557723.HAPS_1370"/>
<dbReference type="GeneID" id="66619445"/>
<dbReference type="KEGG" id="hap:HAPS_1370"/>
<dbReference type="HOGENOM" id="CLU_158040_3_0_6"/>
<dbReference type="Proteomes" id="UP000006743">
    <property type="component" value="Chromosome"/>
</dbReference>
<dbReference type="GO" id="GO:0003700">
    <property type="term" value="F:DNA-binding transcription factor activity"/>
    <property type="evidence" value="ECO:0007669"/>
    <property type="project" value="UniProtKB-UniRule"/>
</dbReference>
<dbReference type="GO" id="GO:0043565">
    <property type="term" value="F:sequence-specific DNA binding"/>
    <property type="evidence" value="ECO:0007669"/>
    <property type="project" value="InterPro"/>
</dbReference>
<dbReference type="FunFam" id="1.10.10.60:FF:000006">
    <property type="entry name" value="DNA-binding protein Fis"/>
    <property type="match status" value="1"/>
</dbReference>
<dbReference type="Gene3D" id="1.10.10.60">
    <property type="entry name" value="Homeodomain-like"/>
    <property type="match status" value="1"/>
</dbReference>
<dbReference type="HAMAP" id="MF_00166">
    <property type="entry name" value="DNA_binding_Fis"/>
    <property type="match status" value="1"/>
</dbReference>
<dbReference type="InterPro" id="IPR005412">
    <property type="entry name" value="Fis_DNA-bd"/>
</dbReference>
<dbReference type="InterPro" id="IPR009057">
    <property type="entry name" value="Homeodomain-like_sf"/>
</dbReference>
<dbReference type="InterPro" id="IPR002197">
    <property type="entry name" value="HTH_Fis"/>
</dbReference>
<dbReference type="InterPro" id="IPR050207">
    <property type="entry name" value="Trans_regulatory_Fis"/>
</dbReference>
<dbReference type="NCBIfam" id="NF001659">
    <property type="entry name" value="PRK00430.1"/>
    <property type="match status" value="1"/>
</dbReference>
<dbReference type="PANTHER" id="PTHR47918">
    <property type="entry name" value="DNA-BINDING PROTEIN FIS"/>
    <property type="match status" value="1"/>
</dbReference>
<dbReference type="PANTHER" id="PTHR47918:SF1">
    <property type="entry name" value="DNA-BINDING PROTEIN FIS"/>
    <property type="match status" value="1"/>
</dbReference>
<dbReference type="Pfam" id="PF02954">
    <property type="entry name" value="HTH_8"/>
    <property type="match status" value="1"/>
</dbReference>
<dbReference type="PIRSF" id="PIRSF002097">
    <property type="entry name" value="DNA-binding_Fis"/>
    <property type="match status" value="1"/>
</dbReference>
<dbReference type="PRINTS" id="PR01591">
    <property type="entry name" value="DNABINDNGFIS"/>
</dbReference>
<dbReference type="PRINTS" id="PR01590">
    <property type="entry name" value="HTHFIS"/>
</dbReference>
<dbReference type="SUPFAM" id="SSF46689">
    <property type="entry name" value="Homeodomain-like"/>
    <property type="match status" value="1"/>
</dbReference>
<proteinExistence type="inferred from homology"/>
<name>FIS_GLAP5</name>
<keyword id="KW-0010">Activator</keyword>
<keyword id="KW-0238">DNA-binding</keyword>
<keyword id="KW-1185">Reference proteome</keyword>
<keyword id="KW-0804">Transcription</keyword>
<keyword id="KW-0805">Transcription regulation</keyword>
<sequence length="98" mass="11263">MLEQQPTQNPLTVSMLNAQAQQVDRPLRENVKQAVRNYLRNLDGQDPTELYELVLSEIEHPMLDMVMQHTRGNQTRAATMLGINRGTLRKKLKKYGMG</sequence>
<evidence type="ECO:0000255" key="1">
    <source>
        <dbReference type="HAMAP-Rule" id="MF_00166"/>
    </source>
</evidence>
<organism>
    <name type="scientific">Glaesserella parasuis serovar 5 (strain SH0165)</name>
    <name type="common">Haemophilus parasuis</name>
    <dbReference type="NCBI Taxonomy" id="557723"/>
    <lineage>
        <taxon>Bacteria</taxon>
        <taxon>Pseudomonadati</taxon>
        <taxon>Pseudomonadota</taxon>
        <taxon>Gammaproteobacteria</taxon>
        <taxon>Pasteurellales</taxon>
        <taxon>Pasteurellaceae</taxon>
        <taxon>Glaesserella</taxon>
    </lineage>
</organism>